<accession>Q9JV28</accession>
<accession>A1IR58</accession>
<feature type="chain" id="PRO_0000179232" description="UDP-N-acetylenolpyruvoylglucosamine reductase">
    <location>
        <begin position="1"/>
        <end position="346"/>
    </location>
</feature>
<feature type="domain" description="FAD-binding PCMH-type" evidence="1">
    <location>
        <begin position="18"/>
        <end position="189"/>
    </location>
</feature>
<feature type="active site" evidence="1">
    <location>
        <position position="165"/>
    </location>
</feature>
<feature type="active site" description="Proton donor" evidence="1">
    <location>
        <position position="240"/>
    </location>
</feature>
<feature type="active site" evidence="1">
    <location>
        <position position="336"/>
    </location>
</feature>
<organism>
    <name type="scientific">Neisseria meningitidis serogroup A / serotype 4A (strain DSM 15465 / Z2491)</name>
    <dbReference type="NCBI Taxonomy" id="122587"/>
    <lineage>
        <taxon>Bacteria</taxon>
        <taxon>Pseudomonadati</taxon>
        <taxon>Pseudomonadota</taxon>
        <taxon>Betaproteobacteria</taxon>
        <taxon>Neisseriales</taxon>
        <taxon>Neisseriaceae</taxon>
        <taxon>Neisseria</taxon>
    </lineage>
</organism>
<reference key="1">
    <citation type="journal article" date="2000" name="Nature">
        <title>Complete DNA sequence of a serogroup A strain of Neisseria meningitidis Z2491.</title>
        <authorList>
            <person name="Parkhill J."/>
            <person name="Achtman M."/>
            <person name="James K.D."/>
            <person name="Bentley S.D."/>
            <person name="Churcher C.M."/>
            <person name="Klee S.R."/>
            <person name="Morelli G."/>
            <person name="Basham D."/>
            <person name="Brown D."/>
            <person name="Chillingworth T."/>
            <person name="Davies R.M."/>
            <person name="Davis P."/>
            <person name="Devlin K."/>
            <person name="Feltwell T."/>
            <person name="Hamlin N."/>
            <person name="Holroyd S."/>
            <person name="Jagels K."/>
            <person name="Leather S."/>
            <person name="Moule S."/>
            <person name="Mungall K.L."/>
            <person name="Quail M.A."/>
            <person name="Rajandream M.A."/>
            <person name="Rutherford K.M."/>
            <person name="Simmonds M."/>
            <person name="Skelton J."/>
            <person name="Whitehead S."/>
            <person name="Spratt B.G."/>
            <person name="Barrell B.G."/>
        </authorList>
    </citation>
    <scope>NUCLEOTIDE SEQUENCE [LARGE SCALE GENOMIC DNA]</scope>
    <source>
        <strain>DSM 15465 / Z2491</strain>
    </source>
</reference>
<evidence type="ECO:0000255" key="1">
    <source>
        <dbReference type="HAMAP-Rule" id="MF_00037"/>
    </source>
</evidence>
<protein>
    <recommendedName>
        <fullName evidence="1">UDP-N-acetylenolpyruvoylglucosamine reductase</fullName>
        <ecNumber evidence="1">1.3.1.98</ecNumber>
    </recommendedName>
    <alternativeName>
        <fullName evidence="1">UDP-N-acetylmuramate dehydrogenase</fullName>
    </alternativeName>
</protein>
<gene>
    <name evidence="1" type="primary">murB</name>
    <name type="ordered locus">NMA1021</name>
</gene>
<name>MURB_NEIMA</name>
<dbReference type="EC" id="1.3.1.98" evidence="1"/>
<dbReference type="EMBL" id="AL157959">
    <property type="protein sequence ID" value="CAM08242.1"/>
    <property type="molecule type" value="Genomic_DNA"/>
</dbReference>
<dbReference type="PIR" id="C81950">
    <property type="entry name" value="C81950"/>
</dbReference>
<dbReference type="RefSeq" id="WP_002217560.1">
    <property type="nucleotide sequence ID" value="NC_003116.1"/>
</dbReference>
<dbReference type="SMR" id="Q9JV28"/>
<dbReference type="EnsemblBacteria" id="CAM08242">
    <property type="protein sequence ID" value="CAM08242"/>
    <property type="gene ID" value="NMA1021"/>
</dbReference>
<dbReference type="GeneID" id="93386362"/>
<dbReference type="KEGG" id="nma:NMA1021"/>
<dbReference type="HOGENOM" id="CLU_035304_0_0_4"/>
<dbReference type="UniPathway" id="UPA00219"/>
<dbReference type="Proteomes" id="UP000000626">
    <property type="component" value="Chromosome"/>
</dbReference>
<dbReference type="GO" id="GO:0005829">
    <property type="term" value="C:cytosol"/>
    <property type="evidence" value="ECO:0007669"/>
    <property type="project" value="TreeGrafter"/>
</dbReference>
<dbReference type="GO" id="GO:0071949">
    <property type="term" value="F:FAD binding"/>
    <property type="evidence" value="ECO:0007669"/>
    <property type="project" value="InterPro"/>
</dbReference>
<dbReference type="GO" id="GO:0008762">
    <property type="term" value="F:UDP-N-acetylmuramate dehydrogenase activity"/>
    <property type="evidence" value="ECO:0007669"/>
    <property type="project" value="UniProtKB-UniRule"/>
</dbReference>
<dbReference type="GO" id="GO:0051301">
    <property type="term" value="P:cell division"/>
    <property type="evidence" value="ECO:0007669"/>
    <property type="project" value="UniProtKB-KW"/>
</dbReference>
<dbReference type="GO" id="GO:0071555">
    <property type="term" value="P:cell wall organization"/>
    <property type="evidence" value="ECO:0007669"/>
    <property type="project" value="UniProtKB-KW"/>
</dbReference>
<dbReference type="GO" id="GO:0009252">
    <property type="term" value="P:peptidoglycan biosynthetic process"/>
    <property type="evidence" value="ECO:0007669"/>
    <property type="project" value="UniProtKB-UniRule"/>
</dbReference>
<dbReference type="GO" id="GO:0008360">
    <property type="term" value="P:regulation of cell shape"/>
    <property type="evidence" value="ECO:0007669"/>
    <property type="project" value="UniProtKB-KW"/>
</dbReference>
<dbReference type="Gene3D" id="3.30.465.10">
    <property type="match status" value="1"/>
</dbReference>
<dbReference type="Gene3D" id="3.90.78.10">
    <property type="entry name" value="UDP-N-acetylenolpyruvoylglucosamine reductase, C-terminal domain"/>
    <property type="match status" value="1"/>
</dbReference>
<dbReference type="Gene3D" id="3.30.43.10">
    <property type="entry name" value="Uridine Diphospho-n-acetylenolpyruvylglucosamine Reductase, domain 2"/>
    <property type="match status" value="1"/>
</dbReference>
<dbReference type="HAMAP" id="MF_00037">
    <property type="entry name" value="MurB"/>
    <property type="match status" value="1"/>
</dbReference>
<dbReference type="InterPro" id="IPR016166">
    <property type="entry name" value="FAD-bd_PCMH"/>
</dbReference>
<dbReference type="InterPro" id="IPR036318">
    <property type="entry name" value="FAD-bd_PCMH-like_sf"/>
</dbReference>
<dbReference type="InterPro" id="IPR016167">
    <property type="entry name" value="FAD-bd_PCMH_sub1"/>
</dbReference>
<dbReference type="InterPro" id="IPR016169">
    <property type="entry name" value="FAD-bd_PCMH_sub2"/>
</dbReference>
<dbReference type="InterPro" id="IPR003170">
    <property type="entry name" value="MurB"/>
</dbReference>
<dbReference type="InterPro" id="IPR011601">
    <property type="entry name" value="MurB_C"/>
</dbReference>
<dbReference type="InterPro" id="IPR036635">
    <property type="entry name" value="MurB_C_sf"/>
</dbReference>
<dbReference type="InterPro" id="IPR006094">
    <property type="entry name" value="Oxid_FAD_bind_N"/>
</dbReference>
<dbReference type="NCBIfam" id="TIGR00179">
    <property type="entry name" value="murB"/>
    <property type="match status" value="1"/>
</dbReference>
<dbReference type="NCBIfam" id="NF000755">
    <property type="entry name" value="PRK00046.1"/>
    <property type="match status" value="1"/>
</dbReference>
<dbReference type="NCBIfam" id="NF010478">
    <property type="entry name" value="PRK13903.1"/>
    <property type="match status" value="1"/>
</dbReference>
<dbReference type="PANTHER" id="PTHR21071">
    <property type="entry name" value="UDP-N-ACETYLENOLPYRUVOYLGLUCOSAMINE REDUCTASE"/>
    <property type="match status" value="1"/>
</dbReference>
<dbReference type="PANTHER" id="PTHR21071:SF4">
    <property type="entry name" value="UDP-N-ACETYLENOLPYRUVOYLGLUCOSAMINE REDUCTASE"/>
    <property type="match status" value="1"/>
</dbReference>
<dbReference type="Pfam" id="PF01565">
    <property type="entry name" value="FAD_binding_4"/>
    <property type="match status" value="1"/>
</dbReference>
<dbReference type="Pfam" id="PF02873">
    <property type="entry name" value="MurB_C"/>
    <property type="match status" value="1"/>
</dbReference>
<dbReference type="SUPFAM" id="SSF56176">
    <property type="entry name" value="FAD-binding/transporter-associated domain-like"/>
    <property type="match status" value="1"/>
</dbReference>
<dbReference type="SUPFAM" id="SSF56194">
    <property type="entry name" value="Uridine diphospho-N-Acetylenolpyruvylglucosamine reductase, MurB, C-terminal domain"/>
    <property type="match status" value="1"/>
</dbReference>
<dbReference type="PROSITE" id="PS51387">
    <property type="entry name" value="FAD_PCMH"/>
    <property type="match status" value="1"/>
</dbReference>
<keyword id="KW-0131">Cell cycle</keyword>
<keyword id="KW-0132">Cell division</keyword>
<keyword id="KW-0133">Cell shape</keyword>
<keyword id="KW-0961">Cell wall biogenesis/degradation</keyword>
<keyword id="KW-0963">Cytoplasm</keyword>
<keyword id="KW-0274">FAD</keyword>
<keyword id="KW-0285">Flavoprotein</keyword>
<keyword id="KW-0521">NADP</keyword>
<keyword id="KW-0560">Oxidoreductase</keyword>
<keyword id="KW-0573">Peptidoglycan synthesis</keyword>
<proteinExistence type="inferred from homology"/>
<sequence length="346" mass="37871">MQPIRYRTDLTPYNTFGLRAQARAFIALEHADGLRDIVRLPEFNRDTVLWLGGGSNILLMEDYAGLVVHMENKGIREIARSDGMVLIEAQAGEIWHDFVLHAVALGLNGLENLSLIPGTVGASPVQNIGAYGVEAKDVIHSVRCFDLDTETFVTLSNADCRFAYRESLFKQEGKGRYVIVSVVFALKTHFVPNLGYGDLAAAVAELSAGRVPTAKDVSDAVCAIRNSKLPNPNVLGNVGSFFKNPVVSAEKAATLLQRHPDMPRYPQPDGSVKLAAGWLIDQCRLKGFQIGGAAVHDRQALVLVNKNNASANDVRQLAQHIKFTVFARFQVELHAEPNWLPASFSL</sequence>
<comment type="function">
    <text evidence="1">Cell wall formation.</text>
</comment>
<comment type="catalytic activity">
    <reaction evidence="1">
        <text>UDP-N-acetyl-alpha-D-muramate + NADP(+) = UDP-N-acetyl-3-O-(1-carboxyvinyl)-alpha-D-glucosamine + NADPH + H(+)</text>
        <dbReference type="Rhea" id="RHEA:12248"/>
        <dbReference type="ChEBI" id="CHEBI:15378"/>
        <dbReference type="ChEBI" id="CHEBI:57783"/>
        <dbReference type="ChEBI" id="CHEBI:58349"/>
        <dbReference type="ChEBI" id="CHEBI:68483"/>
        <dbReference type="ChEBI" id="CHEBI:70757"/>
        <dbReference type="EC" id="1.3.1.98"/>
    </reaction>
</comment>
<comment type="cofactor">
    <cofactor evidence="1">
        <name>FAD</name>
        <dbReference type="ChEBI" id="CHEBI:57692"/>
    </cofactor>
</comment>
<comment type="pathway">
    <text evidence="1">Cell wall biogenesis; peptidoglycan biosynthesis.</text>
</comment>
<comment type="subcellular location">
    <subcellularLocation>
        <location evidence="1">Cytoplasm</location>
    </subcellularLocation>
</comment>
<comment type="similarity">
    <text evidence="1">Belongs to the MurB family.</text>
</comment>